<gene>
    <name evidence="1" type="primary">nuoB</name>
    <name type="ordered locus">Noca_0521</name>
</gene>
<protein>
    <recommendedName>
        <fullName evidence="1">NADH-quinone oxidoreductase subunit B</fullName>
        <ecNumber evidence="1">7.1.1.-</ecNumber>
    </recommendedName>
    <alternativeName>
        <fullName evidence="1">NADH dehydrogenase I subunit B</fullName>
    </alternativeName>
    <alternativeName>
        <fullName evidence="1">NDH-1 subunit B</fullName>
    </alternativeName>
</protein>
<proteinExistence type="inferred from homology"/>
<feature type="chain" id="PRO_0000376294" description="NADH-quinone oxidoreductase subunit B">
    <location>
        <begin position="1"/>
        <end position="184"/>
    </location>
</feature>
<feature type="binding site" evidence="1">
    <location>
        <position position="37"/>
    </location>
    <ligand>
        <name>[4Fe-4S] cluster</name>
        <dbReference type="ChEBI" id="CHEBI:49883"/>
    </ligand>
</feature>
<feature type="binding site" evidence="1">
    <location>
        <position position="38"/>
    </location>
    <ligand>
        <name>[4Fe-4S] cluster</name>
        <dbReference type="ChEBI" id="CHEBI:49883"/>
    </ligand>
</feature>
<feature type="binding site" evidence="1">
    <location>
        <position position="103"/>
    </location>
    <ligand>
        <name>[4Fe-4S] cluster</name>
        <dbReference type="ChEBI" id="CHEBI:49883"/>
    </ligand>
</feature>
<feature type="binding site" evidence="1">
    <location>
        <position position="132"/>
    </location>
    <ligand>
        <name>[4Fe-4S] cluster</name>
        <dbReference type="ChEBI" id="CHEBI:49883"/>
    </ligand>
</feature>
<evidence type="ECO:0000255" key="1">
    <source>
        <dbReference type="HAMAP-Rule" id="MF_01356"/>
    </source>
</evidence>
<keyword id="KW-0004">4Fe-4S</keyword>
<keyword id="KW-1003">Cell membrane</keyword>
<keyword id="KW-0408">Iron</keyword>
<keyword id="KW-0411">Iron-sulfur</keyword>
<keyword id="KW-0472">Membrane</keyword>
<keyword id="KW-0479">Metal-binding</keyword>
<keyword id="KW-0520">NAD</keyword>
<keyword id="KW-0874">Quinone</keyword>
<keyword id="KW-1185">Reference proteome</keyword>
<keyword id="KW-1278">Translocase</keyword>
<keyword id="KW-0813">Transport</keyword>
<reference key="1">
    <citation type="submission" date="2006-12" db="EMBL/GenBank/DDBJ databases">
        <title>Complete sequence of chromosome 1 of Nocardioides sp. JS614.</title>
        <authorList>
            <person name="Copeland A."/>
            <person name="Lucas S."/>
            <person name="Lapidus A."/>
            <person name="Barry K."/>
            <person name="Detter J.C."/>
            <person name="Glavina del Rio T."/>
            <person name="Hammon N."/>
            <person name="Israni S."/>
            <person name="Dalin E."/>
            <person name="Tice H."/>
            <person name="Pitluck S."/>
            <person name="Thompson L.S."/>
            <person name="Brettin T."/>
            <person name="Bruce D."/>
            <person name="Han C."/>
            <person name="Tapia R."/>
            <person name="Schmutz J."/>
            <person name="Larimer F."/>
            <person name="Land M."/>
            <person name="Hauser L."/>
            <person name="Kyrpides N."/>
            <person name="Kim E."/>
            <person name="Mattes T."/>
            <person name="Gossett J."/>
            <person name="Richardson P."/>
        </authorList>
    </citation>
    <scope>NUCLEOTIDE SEQUENCE [LARGE SCALE GENOMIC DNA]</scope>
    <source>
        <strain>ATCC BAA-499 / JS614</strain>
    </source>
</reference>
<sequence length="184" mass="20057">MGIEEKLPSGVLLSTVEGLAGYMRKASFWPASFGLACCAIEMMTSGGPKHDLGRFGMEVFRASPRQADVMIVAGRVSQKMAPVLRQIYDQMPEPKWVLAMGVCASSGGMFNNYAVVQGVDHVVPVDMYLPGCPPRPQMLIDAILKLHDKVQHTKMGAHRAAEIEELETAALRALPTSEMKGQLR</sequence>
<accession>A1SE28</accession>
<comment type="function">
    <text evidence="1">NDH-1 shuttles electrons from NADH, via FMN and iron-sulfur (Fe-S) centers, to quinones in the respiratory chain. The immediate electron acceptor for the enzyme in this species is believed to be a menaquinone. Couples the redox reaction to proton translocation (for every two electrons transferred, four hydrogen ions are translocated across the cytoplasmic membrane), and thus conserves the redox energy in a proton gradient.</text>
</comment>
<comment type="catalytic activity">
    <reaction evidence="1">
        <text>a quinone + NADH + 5 H(+)(in) = a quinol + NAD(+) + 4 H(+)(out)</text>
        <dbReference type="Rhea" id="RHEA:57888"/>
        <dbReference type="ChEBI" id="CHEBI:15378"/>
        <dbReference type="ChEBI" id="CHEBI:24646"/>
        <dbReference type="ChEBI" id="CHEBI:57540"/>
        <dbReference type="ChEBI" id="CHEBI:57945"/>
        <dbReference type="ChEBI" id="CHEBI:132124"/>
    </reaction>
</comment>
<comment type="cofactor">
    <cofactor evidence="1">
        <name>[4Fe-4S] cluster</name>
        <dbReference type="ChEBI" id="CHEBI:49883"/>
    </cofactor>
    <text evidence="1">Binds 1 [4Fe-4S] cluster.</text>
</comment>
<comment type="subunit">
    <text evidence="1">NDH-1 is composed of 14 different subunits. Subunits NuoB, C, D, E, F, and G constitute the peripheral sector of the complex.</text>
</comment>
<comment type="subcellular location">
    <subcellularLocation>
        <location evidence="1">Cell membrane</location>
        <topology evidence="1">Peripheral membrane protein</topology>
        <orientation evidence="1">Cytoplasmic side</orientation>
    </subcellularLocation>
</comment>
<comment type="similarity">
    <text evidence="1">Belongs to the complex I 20 kDa subunit family.</text>
</comment>
<name>NUOB_NOCSJ</name>
<organism>
    <name type="scientific">Nocardioides sp. (strain ATCC BAA-499 / JS614)</name>
    <dbReference type="NCBI Taxonomy" id="196162"/>
    <lineage>
        <taxon>Bacteria</taxon>
        <taxon>Bacillati</taxon>
        <taxon>Actinomycetota</taxon>
        <taxon>Actinomycetes</taxon>
        <taxon>Propionibacteriales</taxon>
        <taxon>Nocardioidaceae</taxon>
        <taxon>Nocardioides</taxon>
    </lineage>
</organism>
<dbReference type="EC" id="7.1.1.-" evidence="1"/>
<dbReference type="EMBL" id="CP000509">
    <property type="protein sequence ID" value="ABL80063.1"/>
    <property type="molecule type" value="Genomic_DNA"/>
</dbReference>
<dbReference type="RefSeq" id="WP_011754013.1">
    <property type="nucleotide sequence ID" value="NC_008699.1"/>
</dbReference>
<dbReference type="SMR" id="A1SE28"/>
<dbReference type="STRING" id="196162.Noca_0521"/>
<dbReference type="KEGG" id="nca:Noca_0521"/>
<dbReference type="eggNOG" id="COG0377">
    <property type="taxonomic scope" value="Bacteria"/>
</dbReference>
<dbReference type="HOGENOM" id="CLU_055737_7_3_11"/>
<dbReference type="OrthoDB" id="9786737at2"/>
<dbReference type="Proteomes" id="UP000000640">
    <property type="component" value="Chromosome"/>
</dbReference>
<dbReference type="GO" id="GO:0005886">
    <property type="term" value="C:plasma membrane"/>
    <property type="evidence" value="ECO:0007669"/>
    <property type="project" value="UniProtKB-SubCell"/>
</dbReference>
<dbReference type="GO" id="GO:0045271">
    <property type="term" value="C:respiratory chain complex I"/>
    <property type="evidence" value="ECO:0007669"/>
    <property type="project" value="TreeGrafter"/>
</dbReference>
<dbReference type="GO" id="GO:0051539">
    <property type="term" value="F:4 iron, 4 sulfur cluster binding"/>
    <property type="evidence" value="ECO:0007669"/>
    <property type="project" value="UniProtKB-KW"/>
</dbReference>
<dbReference type="GO" id="GO:0005506">
    <property type="term" value="F:iron ion binding"/>
    <property type="evidence" value="ECO:0007669"/>
    <property type="project" value="UniProtKB-UniRule"/>
</dbReference>
<dbReference type="GO" id="GO:0008137">
    <property type="term" value="F:NADH dehydrogenase (ubiquinone) activity"/>
    <property type="evidence" value="ECO:0007669"/>
    <property type="project" value="InterPro"/>
</dbReference>
<dbReference type="GO" id="GO:0050136">
    <property type="term" value="F:NADH:ubiquinone reductase (non-electrogenic) activity"/>
    <property type="evidence" value="ECO:0007669"/>
    <property type="project" value="UniProtKB-UniRule"/>
</dbReference>
<dbReference type="GO" id="GO:0048038">
    <property type="term" value="F:quinone binding"/>
    <property type="evidence" value="ECO:0007669"/>
    <property type="project" value="UniProtKB-KW"/>
</dbReference>
<dbReference type="GO" id="GO:0009060">
    <property type="term" value="P:aerobic respiration"/>
    <property type="evidence" value="ECO:0007669"/>
    <property type="project" value="TreeGrafter"/>
</dbReference>
<dbReference type="GO" id="GO:0015990">
    <property type="term" value="P:electron transport coupled proton transport"/>
    <property type="evidence" value="ECO:0007669"/>
    <property type="project" value="TreeGrafter"/>
</dbReference>
<dbReference type="FunFam" id="3.40.50.12280:FF:000004">
    <property type="entry name" value="NADH-quinone oxidoreductase subunit B"/>
    <property type="match status" value="1"/>
</dbReference>
<dbReference type="Gene3D" id="3.40.50.12280">
    <property type="match status" value="1"/>
</dbReference>
<dbReference type="HAMAP" id="MF_01356">
    <property type="entry name" value="NDH1_NuoB"/>
    <property type="match status" value="1"/>
</dbReference>
<dbReference type="InterPro" id="IPR006137">
    <property type="entry name" value="NADH_UbQ_OxRdtase-like_20kDa"/>
</dbReference>
<dbReference type="InterPro" id="IPR006138">
    <property type="entry name" value="NADH_UQ_OxRdtase_20Kd_su"/>
</dbReference>
<dbReference type="NCBIfam" id="TIGR01957">
    <property type="entry name" value="nuoB_fam"/>
    <property type="match status" value="1"/>
</dbReference>
<dbReference type="NCBIfam" id="NF005012">
    <property type="entry name" value="PRK06411.1"/>
    <property type="match status" value="1"/>
</dbReference>
<dbReference type="PANTHER" id="PTHR11995">
    <property type="entry name" value="NADH DEHYDROGENASE"/>
    <property type="match status" value="1"/>
</dbReference>
<dbReference type="PANTHER" id="PTHR11995:SF14">
    <property type="entry name" value="NADH DEHYDROGENASE [UBIQUINONE] IRON-SULFUR PROTEIN 7, MITOCHONDRIAL"/>
    <property type="match status" value="1"/>
</dbReference>
<dbReference type="Pfam" id="PF01058">
    <property type="entry name" value="Oxidored_q6"/>
    <property type="match status" value="1"/>
</dbReference>
<dbReference type="SUPFAM" id="SSF56770">
    <property type="entry name" value="HydA/Nqo6-like"/>
    <property type="match status" value="1"/>
</dbReference>
<dbReference type="PROSITE" id="PS01150">
    <property type="entry name" value="COMPLEX1_20K"/>
    <property type="match status" value="1"/>
</dbReference>